<organism>
    <name type="scientific">Danio rerio</name>
    <name type="common">Zebrafish</name>
    <name type="synonym">Brachydanio rerio</name>
    <dbReference type="NCBI Taxonomy" id="7955"/>
    <lineage>
        <taxon>Eukaryota</taxon>
        <taxon>Metazoa</taxon>
        <taxon>Chordata</taxon>
        <taxon>Craniata</taxon>
        <taxon>Vertebrata</taxon>
        <taxon>Euteleostomi</taxon>
        <taxon>Actinopterygii</taxon>
        <taxon>Neopterygii</taxon>
        <taxon>Teleostei</taxon>
        <taxon>Ostariophysi</taxon>
        <taxon>Cypriniformes</taxon>
        <taxon>Danionidae</taxon>
        <taxon>Danioninae</taxon>
        <taxon>Danio</taxon>
    </lineage>
</organism>
<gene>
    <name type="primary">psme4a</name>
</gene>
<comment type="function">
    <text evidence="1">Associated component of the proteasome that specifically recognizes acetylated histones and promotes ATP- and ubiquitin-independent degradation of core histones during DNA damage response. Recognizes and binds acetylated histones via its bromodomain-like (BRDL) region and activates the proteasome by opening the gated channel for substrate entry. Binds to the core proteasome via its C-terminus, which occupies the same binding sites as the proteasomal ATPases, opening the closed structure of the proteasome via an active gating mechanism. involved in DNA damage response in somatic cells: binds to acetylated histones and promotes degradation of histones (By similarity).</text>
</comment>
<comment type="subunit">
    <text evidence="1">Homodimer. Interacts with the 20S and 26S proteasomes (By similarity).</text>
</comment>
<comment type="subcellular location">
    <subcellularLocation>
        <location evidence="1">Cytoplasm</location>
        <location evidence="1">Cytosol</location>
    </subcellularLocation>
    <subcellularLocation>
        <location evidence="1">Nucleus</location>
    </subcellularLocation>
    <subcellularLocation>
        <location evidence="1">Nucleus speckle</location>
    </subcellularLocation>
</comment>
<comment type="domain">
    <text evidence="1">The bromodomain-like (BRDL) region specifically recognizes and binds acetylated histones.</text>
</comment>
<comment type="similarity">
    <text evidence="3">Belongs to the BLM10 family.</text>
</comment>
<accession>F1QFR9</accession>
<accession>E7F2L9</accession>
<reference key="1">
    <citation type="journal article" date="2013" name="Nature">
        <title>The zebrafish reference genome sequence and its relationship to the human genome.</title>
        <authorList>
            <person name="Howe K."/>
            <person name="Clark M.D."/>
            <person name="Torroja C.F."/>
            <person name="Torrance J."/>
            <person name="Berthelot C."/>
            <person name="Muffato M."/>
            <person name="Collins J.E."/>
            <person name="Humphray S."/>
            <person name="McLaren K."/>
            <person name="Matthews L."/>
            <person name="McLaren S."/>
            <person name="Sealy I."/>
            <person name="Caccamo M."/>
            <person name="Churcher C."/>
            <person name="Scott C."/>
            <person name="Barrett J.C."/>
            <person name="Koch R."/>
            <person name="Rauch G.J."/>
            <person name="White S."/>
            <person name="Chow W."/>
            <person name="Kilian B."/>
            <person name="Quintais L.T."/>
            <person name="Guerra-Assuncao J.A."/>
            <person name="Zhou Y."/>
            <person name="Gu Y."/>
            <person name="Yen J."/>
            <person name="Vogel J.H."/>
            <person name="Eyre T."/>
            <person name="Redmond S."/>
            <person name="Banerjee R."/>
            <person name="Chi J."/>
            <person name="Fu B."/>
            <person name="Langley E."/>
            <person name="Maguire S.F."/>
            <person name="Laird G.K."/>
            <person name="Lloyd D."/>
            <person name="Kenyon E."/>
            <person name="Donaldson S."/>
            <person name="Sehra H."/>
            <person name="Almeida-King J."/>
            <person name="Loveland J."/>
            <person name="Trevanion S."/>
            <person name="Jones M."/>
            <person name="Quail M."/>
            <person name="Willey D."/>
            <person name="Hunt A."/>
            <person name="Burton J."/>
            <person name="Sims S."/>
            <person name="McLay K."/>
            <person name="Plumb B."/>
            <person name="Davis J."/>
            <person name="Clee C."/>
            <person name="Oliver K."/>
            <person name="Clark R."/>
            <person name="Riddle C."/>
            <person name="Elliot D."/>
            <person name="Threadgold G."/>
            <person name="Harden G."/>
            <person name="Ware D."/>
            <person name="Begum S."/>
            <person name="Mortimore B."/>
            <person name="Kerry G."/>
            <person name="Heath P."/>
            <person name="Phillimore B."/>
            <person name="Tracey A."/>
            <person name="Corby N."/>
            <person name="Dunn M."/>
            <person name="Johnson C."/>
            <person name="Wood J."/>
            <person name="Clark S."/>
            <person name="Pelan S."/>
            <person name="Griffiths G."/>
            <person name="Smith M."/>
            <person name="Glithero R."/>
            <person name="Howden P."/>
            <person name="Barker N."/>
            <person name="Lloyd C."/>
            <person name="Stevens C."/>
            <person name="Harley J."/>
            <person name="Holt K."/>
            <person name="Panagiotidis G."/>
            <person name="Lovell J."/>
            <person name="Beasley H."/>
            <person name="Henderson C."/>
            <person name="Gordon D."/>
            <person name="Auger K."/>
            <person name="Wright D."/>
            <person name="Collins J."/>
            <person name="Raisen C."/>
            <person name="Dyer L."/>
            <person name="Leung K."/>
            <person name="Robertson L."/>
            <person name="Ambridge K."/>
            <person name="Leongamornlert D."/>
            <person name="McGuire S."/>
            <person name="Gilderthorp R."/>
            <person name="Griffiths C."/>
            <person name="Manthravadi D."/>
            <person name="Nichol S."/>
            <person name="Barker G."/>
            <person name="Whitehead S."/>
            <person name="Kay M."/>
            <person name="Brown J."/>
            <person name="Murnane C."/>
            <person name="Gray E."/>
            <person name="Humphries M."/>
            <person name="Sycamore N."/>
            <person name="Barker D."/>
            <person name="Saunders D."/>
            <person name="Wallis J."/>
            <person name="Babbage A."/>
            <person name="Hammond S."/>
            <person name="Mashreghi-Mohammadi M."/>
            <person name="Barr L."/>
            <person name="Martin S."/>
            <person name="Wray P."/>
            <person name="Ellington A."/>
            <person name="Matthews N."/>
            <person name="Ellwood M."/>
            <person name="Woodmansey R."/>
            <person name="Clark G."/>
            <person name="Cooper J."/>
            <person name="Tromans A."/>
            <person name="Grafham D."/>
            <person name="Skuce C."/>
            <person name="Pandian R."/>
            <person name="Andrews R."/>
            <person name="Harrison E."/>
            <person name="Kimberley A."/>
            <person name="Garnett J."/>
            <person name="Fosker N."/>
            <person name="Hall R."/>
            <person name="Garner P."/>
            <person name="Kelly D."/>
            <person name="Bird C."/>
            <person name="Palmer S."/>
            <person name="Gehring I."/>
            <person name="Berger A."/>
            <person name="Dooley C.M."/>
            <person name="Ersan-Urun Z."/>
            <person name="Eser C."/>
            <person name="Geiger H."/>
            <person name="Geisler M."/>
            <person name="Karotki L."/>
            <person name="Kirn A."/>
            <person name="Konantz J."/>
            <person name="Konantz M."/>
            <person name="Oberlander M."/>
            <person name="Rudolph-Geiger S."/>
            <person name="Teucke M."/>
            <person name="Lanz C."/>
            <person name="Raddatz G."/>
            <person name="Osoegawa K."/>
            <person name="Zhu B."/>
            <person name="Rapp A."/>
            <person name="Widaa S."/>
            <person name="Langford C."/>
            <person name="Yang F."/>
            <person name="Schuster S.C."/>
            <person name="Carter N.P."/>
            <person name="Harrow J."/>
            <person name="Ning Z."/>
            <person name="Herrero J."/>
            <person name="Searle S.M."/>
            <person name="Enright A."/>
            <person name="Geisler R."/>
            <person name="Plasterk R.H."/>
            <person name="Lee C."/>
            <person name="Westerfield M."/>
            <person name="de Jong P.J."/>
            <person name="Zon L.I."/>
            <person name="Postlethwait J.H."/>
            <person name="Nusslein-Volhard C."/>
            <person name="Hubbard T.J."/>
            <person name="Roest Crollius H."/>
            <person name="Rogers J."/>
            <person name="Stemple D.L."/>
        </authorList>
    </citation>
    <scope>NUCLEOTIDE SEQUENCE [LARGE SCALE GENOMIC DNA]</scope>
    <source>
        <strain>Tuebingen</strain>
    </source>
</reference>
<keyword id="KW-0963">Cytoplasm</keyword>
<keyword id="KW-0227">DNA damage</keyword>
<keyword id="KW-0234">DNA repair</keyword>
<keyword id="KW-0539">Nucleus</keyword>
<keyword id="KW-0647">Proteasome</keyword>
<keyword id="KW-1185">Reference proteome</keyword>
<keyword id="KW-0677">Repeat</keyword>
<name>PSM4A_DANRE</name>
<protein>
    <recommendedName>
        <fullName>Proteasome activator complex subunit 4A</fullName>
    </recommendedName>
    <alternativeName>
        <fullName>Proteasome activator PA200-A</fullName>
    </alternativeName>
</protein>
<proteinExistence type="inferred from homology"/>
<sequence length="1833" mass="211144">MKKEASELLGFSPQKDIVYNELLPYKDKLDDESNEILAQIKGNLGRAVQLREVWPGVLFWTRKLSTYIRLYGRKFNKEDHVLFVKLLYELVTIPKLEISMMQSFARLLITLLKKKELLSREDLELPWRPLYELQDRILYSKTEHLGLNWFPSSVEAVLKVLIKSCRPYFPESATQEMLDEWKPLMCPFDVTMQKAMGYFELFLPTTLPPELHDKGFKLWFDDLISLWVSVQNLPSWEVNLVSLFARLANDNIGYIDWDPYIPKIFTRILRSLNLPVGSSQMLVSRYLTNAYDISYVVIWISALLGGPSKQAQTQLSGLFNGITSFFHPSNHGRWLMKLMKLLQRLPASVVKRLHRERYRTPTWLTPIPESHLLSEQDITDFVESIKQPVLLAMFSKTGSLDAAQALQNLALLRPELVIPPVLEKTYPAMETLIEPHQLTATLSCMIGVARSLVAGGQRFPEGPKHMLPLLMRALPGVDPNDFSKCMITFQFLATFVTLVPLVDCSSAIHSRNGLTQVEKELCSASAEFEHFVLQFVDRCFALIDTSTLEQTREEMEMEKMTHLESLVELGLSSTFSTILTQCSMEIFQVALDKVFNFATTSIFETHVAGRMVADMCRATTKCHPAEALKLFLPHCCSAILQIAANEEVLNEEELDKELMWNLQLLSEVVRVDGDQLLLYRSQLVQILQLTLHLKCKQGYSLACKLLYHILRSMSLIYPREYCSIPGGIQQHTDTYLPIQDWGRPGELWNLEIQWHVPSTEETEFVFYLLDLLLKPELQRLQKHTEGQQDISRDDVLQSLSIVHNCFLGASSLLPPLHGEPVPQLINGMVQLYETKVYTGVDYDMSRENYREDICKVIRPLLNHTLEHSEDDIKSLFSIIKIINDLLHFKGSHKNEFDTRWKSFNLIKKSMENRLHGSKQHIRALLIDRVMLQHELRNLTMEGCSYRSVHQDLINDLLRLSTSRYSQVRCRAQNVLFTALGTYNFCCRDIIPVVLKYLDPERTDVTQQQFKGALYCLLGNHSGICLANLQYWDCIALTWPALVRSGMSPSMSLEKTSIVRLFDDLADKIHRQYETISVNFSIPESCVEIAVKMLKSSSPEPNPGAASEQEELEGRKREEQKNKDAMQKYEKLVADLLDCLHDRNIPWKFEQLTIGFLSLMLRDDLPLPSSAVLFFVESLNHDSLLVRNVAISAVAGILKQLKRPHKKVAVSPYDISELKTSLQSPVVSLLTGDRPDNQWLQYDSSRLPRSQRDWDECCFIEKTHWGYSTWPRKLMLYAPLEEQPKQGQTREEMNEREQIIYDHFSDQLFIDQFIQYLSLEDRKGKDKFSPRRFCLFKGLFRNFDDAFLPLLKPHMERLVADSHESPQRCVAEIISGLIRGSKHWSYSKVEKLWALLCPLLRKALSNITIETYIDWGTCIATACESRDPRKLHWLFEMLMESPVTGEGGSFVDACRLYVLQGGLAQQEWRVPELLHRLLQYLEPKLTQVYKNVRERIGSVLTYIFMIDVDLPYTQPTTSPRIREFTERVLARLKPLTEGEEEIQNHIVEENMEGDQDERTQAIKLLKTVLKWLMTSAGRSFSSSVPEQLRLLPLLFKIAPVENDDSYDEMKTDAKTCLSLMSQGLLYSDQIPQVLSALEEISRSSSWHARYTILTYLQIMVFYNLFTFLSDAKAVCDVRALVLRLLEDEQLEVREMAATTLSGFLQCNFLSIDEPMQAHFESLSKTRLPKRKRRELGSVVDTIPSADLVRRHAGVLGLSACILSSPYDVPTWMPQILMDLSAHLNDTQPIEMTVKKTLSDFRRTHHDNWQEHKQKFTDDQLLVLTDLLVSPCYYA</sequence>
<dbReference type="EMBL" id="FP067401">
    <property type="status" value="NOT_ANNOTATED_CDS"/>
    <property type="molecule type" value="Genomic_DNA"/>
</dbReference>
<dbReference type="EMBL" id="BX663524">
    <property type="status" value="NOT_ANNOTATED_CDS"/>
    <property type="molecule type" value="Genomic_DNA"/>
</dbReference>
<dbReference type="SMR" id="F1QFR9"/>
<dbReference type="FunCoup" id="F1QFR9">
    <property type="interactions" value="1157"/>
</dbReference>
<dbReference type="STRING" id="7955.ENSDARP00000131347"/>
<dbReference type="PaxDb" id="7955-ENSDARP00000129143"/>
<dbReference type="eggNOG" id="KOG1851">
    <property type="taxonomic scope" value="Eukaryota"/>
</dbReference>
<dbReference type="InParanoid" id="F1QFR9"/>
<dbReference type="TreeFam" id="TF106237"/>
<dbReference type="Proteomes" id="UP000000437">
    <property type="component" value="Unplaced"/>
</dbReference>
<dbReference type="GO" id="GO:0005829">
    <property type="term" value="C:cytosol"/>
    <property type="evidence" value="ECO:0000250"/>
    <property type="project" value="UniProtKB"/>
</dbReference>
<dbReference type="GO" id="GO:0016607">
    <property type="term" value="C:nuclear speck"/>
    <property type="evidence" value="ECO:0007669"/>
    <property type="project" value="UniProtKB-SubCell"/>
</dbReference>
<dbReference type="GO" id="GO:0005634">
    <property type="term" value="C:nucleus"/>
    <property type="evidence" value="ECO:0000250"/>
    <property type="project" value="UniProtKB"/>
</dbReference>
<dbReference type="GO" id="GO:1990111">
    <property type="term" value="C:spermatoproteasome complex"/>
    <property type="evidence" value="ECO:0000250"/>
    <property type="project" value="UniProtKB"/>
</dbReference>
<dbReference type="GO" id="GO:0070577">
    <property type="term" value="F:lysine-acetylated histone binding"/>
    <property type="evidence" value="ECO:0007669"/>
    <property type="project" value="InterPro"/>
</dbReference>
<dbReference type="GO" id="GO:0016504">
    <property type="term" value="F:peptidase activator activity"/>
    <property type="evidence" value="ECO:0000250"/>
    <property type="project" value="UniProtKB"/>
</dbReference>
<dbReference type="GO" id="GO:0070628">
    <property type="term" value="F:proteasome binding"/>
    <property type="evidence" value="ECO:0007669"/>
    <property type="project" value="InterPro"/>
</dbReference>
<dbReference type="GO" id="GO:0006974">
    <property type="term" value="P:DNA damage response"/>
    <property type="evidence" value="ECO:0000250"/>
    <property type="project" value="UniProtKB"/>
</dbReference>
<dbReference type="GO" id="GO:0006281">
    <property type="term" value="P:DNA repair"/>
    <property type="evidence" value="ECO:0000250"/>
    <property type="project" value="UniProtKB"/>
</dbReference>
<dbReference type="GO" id="GO:0010499">
    <property type="term" value="P:proteasomal ubiquitin-independent protein catabolic process"/>
    <property type="evidence" value="ECO:0000250"/>
    <property type="project" value="UniProtKB"/>
</dbReference>
<dbReference type="GO" id="GO:0035092">
    <property type="term" value="P:sperm DNA condensation"/>
    <property type="evidence" value="ECO:0000250"/>
    <property type="project" value="UniProtKB"/>
</dbReference>
<dbReference type="FunFam" id="1.25.10.10:FF:000183">
    <property type="entry name" value="Proteasome activator complex subunit 4"/>
    <property type="match status" value="1"/>
</dbReference>
<dbReference type="Gene3D" id="1.25.10.10">
    <property type="entry name" value="Leucine-rich Repeat Variant"/>
    <property type="match status" value="1"/>
</dbReference>
<dbReference type="InterPro" id="IPR011989">
    <property type="entry name" value="ARM-like"/>
</dbReference>
<dbReference type="InterPro" id="IPR016024">
    <property type="entry name" value="ARM-type_fold"/>
</dbReference>
<dbReference type="InterPro" id="IPR032430">
    <property type="entry name" value="Blm10_mid"/>
</dbReference>
<dbReference type="InterPro" id="IPR055455">
    <property type="entry name" value="HEAT_PSME4"/>
</dbReference>
<dbReference type="InterPro" id="IPR035309">
    <property type="entry name" value="PSME4"/>
</dbReference>
<dbReference type="InterPro" id="IPR021843">
    <property type="entry name" value="PSME4_C"/>
</dbReference>
<dbReference type="PANTHER" id="PTHR32170">
    <property type="entry name" value="PROTEASOME ACTIVATOR COMPLEX SUBUNIT 4"/>
    <property type="match status" value="1"/>
</dbReference>
<dbReference type="PANTHER" id="PTHR32170:SF3">
    <property type="entry name" value="PROTEASOME ACTIVATOR COMPLEX SUBUNIT 4"/>
    <property type="match status" value="1"/>
</dbReference>
<dbReference type="Pfam" id="PF23096">
    <property type="entry name" value="HEAT_PSME4"/>
    <property type="match status" value="1"/>
</dbReference>
<dbReference type="Pfam" id="PF16507">
    <property type="entry name" value="HEAT_PSME4_mid"/>
    <property type="match status" value="1"/>
</dbReference>
<dbReference type="Pfam" id="PF11919">
    <property type="entry name" value="PSME4_C"/>
    <property type="match status" value="1"/>
</dbReference>
<dbReference type="SUPFAM" id="SSF48371">
    <property type="entry name" value="ARM repeat"/>
    <property type="match status" value="2"/>
</dbReference>
<evidence type="ECO:0000250" key="1"/>
<evidence type="ECO:0000256" key="2">
    <source>
        <dbReference type="SAM" id="MobiDB-lite"/>
    </source>
</evidence>
<evidence type="ECO:0000305" key="3"/>
<feature type="chain" id="PRO_0000423300" description="Proteasome activator complex subunit 4A">
    <location>
        <begin position="1"/>
        <end position="1833"/>
    </location>
</feature>
<feature type="repeat" description="HEAT 1">
    <location>
        <begin position="460"/>
        <end position="504"/>
    </location>
</feature>
<feature type="repeat" description="HEAT 2">
    <location>
        <begin position="983"/>
        <end position="1022"/>
    </location>
</feature>
<feature type="repeat" description="HEAT 3">
    <location>
        <begin position="1164"/>
        <end position="1202"/>
    </location>
</feature>
<feature type="repeat" description="HEAT 4">
    <location>
        <begin position="1344"/>
        <end position="1382"/>
    </location>
</feature>
<feature type="repeat" description="HEAT 5">
    <location>
        <begin position="1626"/>
        <end position="1664"/>
    </location>
</feature>
<feature type="repeat" description="HEAT 6">
    <location>
        <begin position="1670"/>
        <end position="1708"/>
    </location>
</feature>
<feature type="region of interest" description="Disordered" evidence="2">
    <location>
        <begin position="1095"/>
        <end position="1122"/>
    </location>
</feature>
<feature type="region of interest" description="Bromodomain-like (BRDL)" evidence="1">
    <location>
        <begin position="1640"/>
        <end position="1728"/>
    </location>
</feature>
<feature type="compositionally biased region" description="Basic and acidic residues" evidence="2">
    <location>
        <begin position="1111"/>
        <end position="1122"/>
    </location>
</feature>